<proteinExistence type="inferred from homology"/>
<comment type="function">
    <text evidence="1">May play a role in spermatozoa mobility.</text>
</comment>
<comment type="subcellular location">
    <subcellularLocation>
        <location evidence="2">Membrane</location>
        <topology evidence="2">Multi-pass membrane protein</topology>
    </subcellularLocation>
</comment>
<comment type="similarity">
    <text evidence="4">Belongs to the CD225/Dispanin family.</text>
</comment>
<name>PMIS2_HUMAN</name>
<gene>
    <name evidence="5" type="primary">PMIS2</name>
</gene>
<keyword id="KW-0472">Membrane</keyword>
<keyword id="KW-1185">Reference proteome</keyword>
<keyword id="KW-0812">Transmembrane</keyword>
<keyword id="KW-1133">Transmembrane helix</keyword>
<reference key="1">
    <citation type="journal article" date="2004" name="Nature">
        <title>The DNA sequence and biology of human chromosome 19.</title>
        <authorList>
            <person name="Grimwood J."/>
            <person name="Gordon L.A."/>
            <person name="Olsen A.S."/>
            <person name="Terry A."/>
            <person name="Schmutz J."/>
            <person name="Lamerdin J.E."/>
            <person name="Hellsten U."/>
            <person name="Goodstein D."/>
            <person name="Couronne O."/>
            <person name="Tran-Gyamfi M."/>
            <person name="Aerts A."/>
            <person name="Altherr M."/>
            <person name="Ashworth L."/>
            <person name="Bajorek E."/>
            <person name="Black S."/>
            <person name="Branscomb E."/>
            <person name="Caenepeel S."/>
            <person name="Carrano A.V."/>
            <person name="Caoile C."/>
            <person name="Chan Y.M."/>
            <person name="Christensen M."/>
            <person name="Cleland C.A."/>
            <person name="Copeland A."/>
            <person name="Dalin E."/>
            <person name="Dehal P."/>
            <person name="Denys M."/>
            <person name="Detter J.C."/>
            <person name="Escobar J."/>
            <person name="Flowers D."/>
            <person name="Fotopulos D."/>
            <person name="Garcia C."/>
            <person name="Georgescu A.M."/>
            <person name="Glavina T."/>
            <person name="Gomez M."/>
            <person name="Gonzales E."/>
            <person name="Groza M."/>
            <person name="Hammon N."/>
            <person name="Hawkins T."/>
            <person name="Haydu L."/>
            <person name="Ho I."/>
            <person name="Huang W."/>
            <person name="Israni S."/>
            <person name="Jett J."/>
            <person name="Kadner K."/>
            <person name="Kimball H."/>
            <person name="Kobayashi A."/>
            <person name="Larionov V."/>
            <person name="Leem S.-H."/>
            <person name="Lopez F."/>
            <person name="Lou Y."/>
            <person name="Lowry S."/>
            <person name="Malfatti S."/>
            <person name="Martinez D."/>
            <person name="McCready P.M."/>
            <person name="Medina C."/>
            <person name="Morgan J."/>
            <person name="Nelson K."/>
            <person name="Nolan M."/>
            <person name="Ovcharenko I."/>
            <person name="Pitluck S."/>
            <person name="Pollard M."/>
            <person name="Popkie A.P."/>
            <person name="Predki P."/>
            <person name="Quan G."/>
            <person name="Ramirez L."/>
            <person name="Rash S."/>
            <person name="Retterer J."/>
            <person name="Rodriguez A."/>
            <person name="Rogers S."/>
            <person name="Salamov A."/>
            <person name="Salazar A."/>
            <person name="She X."/>
            <person name="Smith D."/>
            <person name="Slezak T."/>
            <person name="Solovyev V."/>
            <person name="Thayer N."/>
            <person name="Tice H."/>
            <person name="Tsai M."/>
            <person name="Ustaszewska A."/>
            <person name="Vo N."/>
            <person name="Wagner M."/>
            <person name="Wheeler J."/>
            <person name="Wu K."/>
            <person name="Xie G."/>
            <person name="Yang J."/>
            <person name="Dubchak I."/>
            <person name="Furey T.S."/>
            <person name="DeJong P."/>
            <person name="Dickson M."/>
            <person name="Gordon D."/>
            <person name="Eichler E.E."/>
            <person name="Pennacchio L.A."/>
            <person name="Richardson P."/>
            <person name="Stubbs L."/>
            <person name="Rokhsar D.S."/>
            <person name="Myers R.M."/>
            <person name="Rubin E.M."/>
            <person name="Lucas S.M."/>
        </authorList>
    </citation>
    <scope>NUCLEOTIDE SEQUENCE [LARGE SCALE GENOMIC DNA]</scope>
</reference>
<organism>
    <name type="scientific">Homo sapiens</name>
    <name type="common">Human</name>
    <dbReference type="NCBI Taxonomy" id="9606"/>
    <lineage>
        <taxon>Eukaryota</taxon>
        <taxon>Metazoa</taxon>
        <taxon>Chordata</taxon>
        <taxon>Craniata</taxon>
        <taxon>Vertebrata</taxon>
        <taxon>Euteleostomi</taxon>
        <taxon>Mammalia</taxon>
        <taxon>Eutheria</taxon>
        <taxon>Euarchontoglires</taxon>
        <taxon>Primates</taxon>
        <taxon>Haplorrhini</taxon>
        <taxon>Catarrhini</taxon>
        <taxon>Hominidae</taxon>
        <taxon>Homo</taxon>
    </lineage>
</organism>
<evidence type="ECO:0000250" key="1">
    <source>
        <dbReference type="UniProtKB" id="Q8CES1"/>
    </source>
</evidence>
<evidence type="ECO:0000255" key="2"/>
<evidence type="ECO:0000256" key="3">
    <source>
        <dbReference type="SAM" id="MobiDB-lite"/>
    </source>
</evidence>
<evidence type="ECO:0000305" key="4"/>
<evidence type="ECO:0000312" key="5">
    <source>
        <dbReference type="HGNC" id="HGNC:53649"/>
    </source>
</evidence>
<protein>
    <recommendedName>
        <fullName evidence="4">Transmembrane protein PMIS2</fullName>
    </recommendedName>
</protein>
<accession>A0A1W2PS18</accession>
<sequence>MALKPPSATQPAPNAPATPDAPPTTGDPGASAAPGSPTTTGGPGAPAEVPQEPQEPTQTPEELAFYAPNYLCLTIFAILLFPPFGLAALYFSYEGSWTQKPTSMLPPLQTMKANQNSEWEEAYINSGRTGWFGAFVVMIGLGIIYGLVLY</sequence>
<feature type="chain" id="PRO_0000444534" description="Transmembrane protein PMIS2">
    <location>
        <begin position="1"/>
        <end position="150"/>
    </location>
</feature>
<feature type="transmembrane region" description="Helical" evidence="2">
    <location>
        <begin position="71"/>
        <end position="91"/>
    </location>
</feature>
<feature type="transmembrane region" description="Helical" evidence="2">
    <location>
        <begin position="130"/>
        <end position="150"/>
    </location>
</feature>
<feature type="region of interest" description="Disordered" evidence="3">
    <location>
        <begin position="1"/>
        <end position="61"/>
    </location>
</feature>
<feature type="compositionally biased region" description="Low complexity" evidence="3">
    <location>
        <begin position="1"/>
        <end position="12"/>
    </location>
</feature>
<feature type="compositionally biased region" description="Pro residues" evidence="3">
    <location>
        <begin position="13"/>
        <end position="22"/>
    </location>
</feature>
<feature type="compositionally biased region" description="Low complexity" evidence="3">
    <location>
        <begin position="23"/>
        <end position="61"/>
    </location>
</feature>
<dbReference type="EMBL" id="AC002115">
    <property type="status" value="NOT_ANNOTATED_CDS"/>
    <property type="molecule type" value="Genomic_DNA"/>
</dbReference>
<dbReference type="CCDS" id="CCDS92590.1"/>
<dbReference type="RefSeq" id="NP_001382341.1">
    <property type="nucleotide sequence ID" value="NM_001395412.1"/>
</dbReference>
<dbReference type="STRING" id="9606.ENSP00000492557"/>
<dbReference type="GlyGen" id="A0A1W2PS18">
    <property type="glycosylation" value="1 site"/>
</dbReference>
<dbReference type="BioMuta" id="ENSG00000283758"/>
<dbReference type="Antibodypedia" id="82040">
    <property type="antibodies" value="1 antibodies from 1 providers"/>
</dbReference>
<dbReference type="Ensembl" id="ENST00000640449.2">
    <property type="protein sequence ID" value="ENSP00000492557.1"/>
    <property type="gene ID" value="ENSG00000283758.2"/>
</dbReference>
<dbReference type="GeneID" id="111216276"/>
<dbReference type="MANE-Select" id="ENST00000640449.2">
    <property type="protein sequence ID" value="ENSP00000492557.1"/>
    <property type="RefSeq nucleotide sequence ID" value="NM_001395412.1"/>
    <property type="RefSeq protein sequence ID" value="NP_001382341.1"/>
</dbReference>
<dbReference type="AGR" id="HGNC:53649"/>
<dbReference type="GeneCards" id="PMIS2"/>
<dbReference type="HGNC" id="HGNC:53649">
    <property type="gene designation" value="PMIS2"/>
</dbReference>
<dbReference type="HPA" id="ENSG00000283758">
    <property type="expression patterns" value="Not detected"/>
</dbReference>
<dbReference type="neXtProt" id="NX_A0A1W2PS18"/>
<dbReference type="VEuPathDB" id="HostDB:ENSG00000283758"/>
<dbReference type="GeneTree" id="ENSGT00950000183147"/>
<dbReference type="InParanoid" id="A0A1W2PS18"/>
<dbReference type="OMA" id="WEDAYIN"/>
<dbReference type="OrthoDB" id="9808647at2759"/>
<dbReference type="PAN-GO" id="A0A1W2PS18">
    <property type="GO annotations" value="2 GO annotations based on evolutionary models"/>
</dbReference>
<dbReference type="ChiTaRS" id="PMIS2">
    <property type="organism name" value="human"/>
</dbReference>
<dbReference type="Pharos" id="A0A1W2PS18">
    <property type="development level" value="Tdark"/>
</dbReference>
<dbReference type="PRO" id="PR:A0A1W2PS18"/>
<dbReference type="Proteomes" id="UP000005640">
    <property type="component" value="Chromosome 19"/>
</dbReference>
<dbReference type="RNAct" id="A0A1W2PS18">
    <property type="molecule type" value="protein"/>
</dbReference>
<dbReference type="Bgee" id="ENSG00000283758">
    <property type="expression patterns" value="Expressed in left testis and 9 other cell types or tissues"/>
</dbReference>
<dbReference type="ExpressionAtlas" id="A0A1W2PS18">
    <property type="expression patterns" value="baseline and differential"/>
</dbReference>
<dbReference type="GO" id="GO:0043231">
    <property type="term" value="C:intracellular membrane-bounded organelle"/>
    <property type="evidence" value="ECO:0000318"/>
    <property type="project" value="GO_Central"/>
</dbReference>
<dbReference type="GO" id="GO:0016020">
    <property type="term" value="C:membrane"/>
    <property type="evidence" value="ECO:0000318"/>
    <property type="project" value="GO_Central"/>
</dbReference>
<dbReference type="InterPro" id="IPR007593">
    <property type="entry name" value="CD225/Dispanin_fam"/>
</dbReference>
<dbReference type="PANTHER" id="PTHR14768:SF5">
    <property type="entry name" value="TRANSMEMBRANE PROTEIN PMIS2"/>
    <property type="match status" value="1"/>
</dbReference>
<dbReference type="PANTHER" id="PTHR14768">
    <property type="entry name" value="UPF0338 PROTEIN"/>
    <property type="match status" value="1"/>
</dbReference>
<dbReference type="Pfam" id="PF04505">
    <property type="entry name" value="CD225"/>
    <property type="match status" value="1"/>
</dbReference>